<proteinExistence type="inferred from homology"/>
<name>IXTPA_PARC0</name>
<sequence>MKLVLASNNRGKLAELQSMFSPLGVELVRQADLGVGEADEPFHTFVENALAKARFAAEHTGLPALADDAGLCVDAFGGQPGVQTAYYATRFGYEKGDANNVRALLEQMRGVASRRAAMVSTLVAVRSPDDPEPLIAVGRVVGEIATEPRGDGGFGFDPVMFIPEFGKTFAELPVEVKNAHSHRGRSAQQMLALMRERWF</sequence>
<comment type="function">
    <text evidence="1">Pyrophosphatase that catalyzes the hydrolysis of nucleoside triphosphates to their monophosphate derivatives, with a high preference for the non-canonical purine nucleotides XTP (xanthosine triphosphate), dITP (deoxyinosine triphosphate) and ITP. Seems to function as a house-cleaning enzyme that removes non-canonical purine nucleotides from the nucleotide pool, thus preventing their incorporation into DNA/RNA and avoiding chromosomal lesions.</text>
</comment>
<comment type="catalytic activity">
    <reaction evidence="1">
        <text>XTP + H2O = XMP + diphosphate + H(+)</text>
        <dbReference type="Rhea" id="RHEA:28610"/>
        <dbReference type="ChEBI" id="CHEBI:15377"/>
        <dbReference type="ChEBI" id="CHEBI:15378"/>
        <dbReference type="ChEBI" id="CHEBI:33019"/>
        <dbReference type="ChEBI" id="CHEBI:57464"/>
        <dbReference type="ChEBI" id="CHEBI:61314"/>
        <dbReference type="EC" id="3.6.1.66"/>
    </reaction>
</comment>
<comment type="catalytic activity">
    <reaction evidence="1">
        <text>dITP + H2O = dIMP + diphosphate + H(+)</text>
        <dbReference type="Rhea" id="RHEA:28342"/>
        <dbReference type="ChEBI" id="CHEBI:15377"/>
        <dbReference type="ChEBI" id="CHEBI:15378"/>
        <dbReference type="ChEBI" id="CHEBI:33019"/>
        <dbReference type="ChEBI" id="CHEBI:61194"/>
        <dbReference type="ChEBI" id="CHEBI:61382"/>
        <dbReference type="EC" id="3.6.1.66"/>
    </reaction>
</comment>
<comment type="catalytic activity">
    <reaction evidence="1">
        <text>ITP + H2O = IMP + diphosphate + H(+)</text>
        <dbReference type="Rhea" id="RHEA:29399"/>
        <dbReference type="ChEBI" id="CHEBI:15377"/>
        <dbReference type="ChEBI" id="CHEBI:15378"/>
        <dbReference type="ChEBI" id="CHEBI:33019"/>
        <dbReference type="ChEBI" id="CHEBI:58053"/>
        <dbReference type="ChEBI" id="CHEBI:61402"/>
        <dbReference type="EC" id="3.6.1.66"/>
    </reaction>
</comment>
<comment type="cofactor">
    <cofactor evidence="1">
        <name>Mg(2+)</name>
        <dbReference type="ChEBI" id="CHEBI:18420"/>
    </cofactor>
    <text evidence="1">Binds 1 Mg(2+) ion per subunit.</text>
</comment>
<comment type="subunit">
    <text evidence="1">Homodimer.</text>
</comment>
<comment type="similarity">
    <text evidence="1">Belongs to the HAM1 NTPase family.</text>
</comment>
<feature type="chain" id="PRO_1000068405" description="dITP/XTP pyrophosphatase">
    <location>
        <begin position="1"/>
        <end position="199"/>
    </location>
</feature>
<feature type="active site" description="Proton acceptor" evidence="1">
    <location>
        <position position="68"/>
    </location>
</feature>
<feature type="binding site" evidence="1">
    <location>
        <begin position="7"/>
        <end position="12"/>
    </location>
    <ligand>
        <name>substrate</name>
    </ligand>
</feature>
<feature type="binding site" evidence="1">
    <location>
        <position position="39"/>
    </location>
    <ligand>
        <name>Mg(2+)</name>
        <dbReference type="ChEBI" id="CHEBI:18420"/>
    </ligand>
</feature>
<feature type="binding site" evidence="1">
    <location>
        <position position="68"/>
    </location>
    <ligand>
        <name>Mg(2+)</name>
        <dbReference type="ChEBI" id="CHEBI:18420"/>
    </ligand>
</feature>
<feature type="binding site" evidence="1">
    <location>
        <position position="69"/>
    </location>
    <ligand>
        <name>substrate</name>
    </ligand>
</feature>
<feature type="binding site" evidence="1">
    <location>
        <begin position="154"/>
        <end position="157"/>
    </location>
    <ligand>
        <name>substrate</name>
    </ligand>
</feature>
<feature type="binding site" evidence="1">
    <location>
        <position position="177"/>
    </location>
    <ligand>
        <name>substrate</name>
    </ligand>
</feature>
<feature type="binding site" evidence="1">
    <location>
        <begin position="182"/>
        <end position="183"/>
    </location>
    <ligand>
        <name>substrate</name>
    </ligand>
</feature>
<organism>
    <name type="scientific">Paracidovorax citrulli (strain AAC00-1)</name>
    <name type="common">Acidovorax citrulli</name>
    <dbReference type="NCBI Taxonomy" id="397945"/>
    <lineage>
        <taxon>Bacteria</taxon>
        <taxon>Pseudomonadati</taxon>
        <taxon>Pseudomonadota</taxon>
        <taxon>Betaproteobacteria</taxon>
        <taxon>Burkholderiales</taxon>
        <taxon>Comamonadaceae</taxon>
        <taxon>Paracidovorax</taxon>
    </lineage>
</organism>
<accession>A1TT41</accession>
<reference key="1">
    <citation type="submission" date="2006-12" db="EMBL/GenBank/DDBJ databases">
        <title>Complete sequence of Acidovorax avenae subsp. citrulli AAC00-1.</title>
        <authorList>
            <person name="Copeland A."/>
            <person name="Lucas S."/>
            <person name="Lapidus A."/>
            <person name="Barry K."/>
            <person name="Detter J.C."/>
            <person name="Glavina del Rio T."/>
            <person name="Dalin E."/>
            <person name="Tice H."/>
            <person name="Pitluck S."/>
            <person name="Kiss H."/>
            <person name="Brettin T."/>
            <person name="Bruce D."/>
            <person name="Han C."/>
            <person name="Tapia R."/>
            <person name="Gilna P."/>
            <person name="Schmutz J."/>
            <person name="Larimer F."/>
            <person name="Land M."/>
            <person name="Hauser L."/>
            <person name="Kyrpides N."/>
            <person name="Kim E."/>
            <person name="Stahl D."/>
            <person name="Richardson P."/>
        </authorList>
    </citation>
    <scope>NUCLEOTIDE SEQUENCE [LARGE SCALE GENOMIC DNA]</scope>
    <source>
        <strain>AAC00-1</strain>
    </source>
</reference>
<gene>
    <name type="ordered locus">Aave_3578</name>
</gene>
<keyword id="KW-0378">Hydrolase</keyword>
<keyword id="KW-0460">Magnesium</keyword>
<keyword id="KW-0479">Metal-binding</keyword>
<keyword id="KW-0546">Nucleotide metabolism</keyword>
<keyword id="KW-0547">Nucleotide-binding</keyword>
<protein>
    <recommendedName>
        <fullName evidence="1">dITP/XTP pyrophosphatase</fullName>
        <ecNumber evidence="1">3.6.1.66</ecNumber>
    </recommendedName>
    <alternativeName>
        <fullName evidence="1">Non-canonical purine NTP pyrophosphatase</fullName>
    </alternativeName>
    <alternativeName>
        <fullName evidence="1">Non-standard purine NTP pyrophosphatase</fullName>
    </alternativeName>
    <alternativeName>
        <fullName evidence="1">Nucleoside-triphosphate diphosphatase</fullName>
    </alternativeName>
    <alternativeName>
        <fullName evidence="1">Nucleoside-triphosphate pyrophosphatase</fullName>
        <shortName evidence="1">NTPase</shortName>
    </alternativeName>
</protein>
<dbReference type="EC" id="3.6.1.66" evidence="1"/>
<dbReference type="EMBL" id="CP000512">
    <property type="protein sequence ID" value="ABM34129.1"/>
    <property type="molecule type" value="Genomic_DNA"/>
</dbReference>
<dbReference type="RefSeq" id="WP_011796626.1">
    <property type="nucleotide sequence ID" value="NC_008752.1"/>
</dbReference>
<dbReference type="SMR" id="A1TT41"/>
<dbReference type="STRING" id="397945.Aave_3578"/>
<dbReference type="GeneID" id="79791540"/>
<dbReference type="KEGG" id="aav:Aave_3578"/>
<dbReference type="eggNOG" id="COG0127">
    <property type="taxonomic scope" value="Bacteria"/>
</dbReference>
<dbReference type="HOGENOM" id="CLU_082080_0_3_4"/>
<dbReference type="OrthoDB" id="9807456at2"/>
<dbReference type="Proteomes" id="UP000002596">
    <property type="component" value="Chromosome"/>
</dbReference>
<dbReference type="GO" id="GO:0005829">
    <property type="term" value="C:cytosol"/>
    <property type="evidence" value="ECO:0007669"/>
    <property type="project" value="TreeGrafter"/>
</dbReference>
<dbReference type="GO" id="GO:0035870">
    <property type="term" value="F:dITP diphosphatase activity"/>
    <property type="evidence" value="ECO:0007669"/>
    <property type="project" value="RHEA"/>
</dbReference>
<dbReference type="GO" id="GO:0036220">
    <property type="term" value="F:ITP diphosphatase activity"/>
    <property type="evidence" value="ECO:0007669"/>
    <property type="project" value="UniProtKB-EC"/>
</dbReference>
<dbReference type="GO" id="GO:0046872">
    <property type="term" value="F:metal ion binding"/>
    <property type="evidence" value="ECO:0007669"/>
    <property type="project" value="UniProtKB-KW"/>
</dbReference>
<dbReference type="GO" id="GO:0000166">
    <property type="term" value="F:nucleotide binding"/>
    <property type="evidence" value="ECO:0007669"/>
    <property type="project" value="UniProtKB-KW"/>
</dbReference>
<dbReference type="GO" id="GO:0017111">
    <property type="term" value="F:ribonucleoside triphosphate phosphatase activity"/>
    <property type="evidence" value="ECO:0007669"/>
    <property type="project" value="InterPro"/>
</dbReference>
<dbReference type="GO" id="GO:0036222">
    <property type="term" value="F:XTP diphosphatase activity"/>
    <property type="evidence" value="ECO:0007669"/>
    <property type="project" value="RHEA"/>
</dbReference>
<dbReference type="GO" id="GO:0009117">
    <property type="term" value="P:nucleotide metabolic process"/>
    <property type="evidence" value="ECO:0007669"/>
    <property type="project" value="UniProtKB-KW"/>
</dbReference>
<dbReference type="GO" id="GO:0009146">
    <property type="term" value="P:purine nucleoside triphosphate catabolic process"/>
    <property type="evidence" value="ECO:0007669"/>
    <property type="project" value="UniProtKB-UniRule"/>
</dbReference>
<dbReference type="CDD" id="cd00515">
    <property type="entry name" value="HAM1"/>
    <property type="match status" value="1"/>
</dbReference>
<dbReference type="FunFam" id="3.90.950.10:FF:000001">
    <property type="entry name" value="dITP/XTP pyrophosphatase"/>
    <property type="match status" value="1"/>
</dbReference>
<dbReference type="Gene3D" id="3.90.950.10">
    <property type="match status" value="1"/>
</dbReference>
<dbReference type="HAMAP" id="MF_01405">
    <property type="entry name" value="Non_canon_purine_NTPase"/>
    <property type="match status" value="1"/>
</dbReference>
<dbReference type="InterPro" id="IPR020922">
    <property type="entry name" value="dITP/XTP_pyrophosphatase"/>
</dbReference>
<dbReference type="InterPro" id="IPR029001">
    <property type="entry name" value="ITPase-like_fam"/>
</dbReference>
<dbReference type="InterPro" id="IPR002637">
    <property type="entry name" value="RdgB/HAM1"/>
</dbReference>
<dbReference type="NCBIfam" id="TIGR00042">
    <property type="entry name" value="RdgB/HAM1 family non-canonical purine NTP pyrophosphatase"/>
    <property type="match status" value="1"/>
</dbReference>
<dbReference type="PANTHER" id="PTHR11067:SF9">
    <property type="entry name" value="INOSINE TRIPHOSPHATE PYROPHOSPHATASE"/>
    <property type="match status" value="1"/>
</dbReference>
<dbReference type="PANTHER" id="PTHR11067">
    <property type="entry name" value="INOSINE TRIPHOSPHATE PYROPHOSPHATASE/HAM1 PROTEIN"/>
    <property type="match status" value="1"/>
</dbReference>
<dbReference type="Pfam" id="PF01725">
    <property type="entry name" value="Ham1p_like"/>
    <property type="match status" value="1"/>
</dbReference>
<dbReference type="SUPFAM" id="SSF52972">
    <property type="entry name" value="ITPase-like"/>
    <property type="match status" value="1"/>
</dbReference>
<evidence type="ECO:0000255" key="1">
    <source>
        <dbReference type="HAMAP-Rule" id="MF_01405"/>
    </source>
</evidence>